<keyword id="KW-0004">4Fe-4S</keyword>
<keyword id="KW-0997">Cell inner membrane</keyword>
<keyword id="KW-1003">Cell membrane</keyword>
<keyword id="KW-0408">Iron</keyword>
<keyword id="KW-0411">Iron-sulfur</keyword>
<keyword id="KW-0472">Membrane</keyword>
<keyword id="KW-0479">Metal-binding</keyword>
<keyword id="KW-0520">NAD</keyword>
<keyword id="KW-0874">Quinone</keyword>
<keyword id="KW-1278">Translocase</keyword>
<keyword id="KW-0813">Transport</keyword>
<keyword id="KW-0830">Ubiquinone</keyword>
<name>NUOB_RICPU</name>
<reference key="1">
    <citation type="journal article" date="2009" name="PLoS ONE">
        <title>Genome sequence of the endosymbiont Rickettsia peacockii and comparison with virulent Rickettsia rickettsii: identification of virulence factors.</title>
        <authorList>
            <person name="Felsheim R.F."/>
            <person name="Kurtti T.J."/>
            <person name="Munderloh U.G."/>
        </authorList>
    </citation>
    <scope>NUCLEOTIDE SEQUENCE [LARGE SCALE GENOMIC DNA]</scope>
    <source>
        <strain>Rustic</strain>
    </source>
</reference>
<sequence length="174" mass="19616">MKNNFYQEDELLSNELSNRGFLLTKVDDVIGWARANSLWPMTFGLACCAVEMMQAAASRYDMDRFGMLFRPSPRQSDLMIVAGTLTNKMAPALRKVYDQMAEPKWVLSMGSCANGGGYYHFSYSVVRGCDRIVPVDVYVPGCPPTAEALIYGLMQLQKKIKRTTGFKYDARQTH</sequence>
<organism>
    <name type="scientific">Rickettsia peacockii (strain Rustic)</name>
    <dbReference type="NCBI Taxonomy" id="562019"/>
    <lineage>
        <taxon>Bacteria</taxon>
        <taxon>Pseudomonadati</taxon>
        <taxon>Pseudomonadota</taxon>
        <taxon>Alphaproteobacteria</taxon>
        <taxon>Rickettsiales</taxon>
        <taxon>Rickettsiaceae</taxon>
        <taxon>Rickettsieae</taxon>
        <taxon>Rickettsia</taxon>
        <taxon>spotted fever group</taxon>
    </lineage>
</organism>
<feature type="chain" id="PRO_1000214866" description="NADH-quinone oxidoreductase subunit B">
    <location>
        <begin position="1"/>
        <end position="174"/>
    </location>
</feature>
<feature type="binding site" evidence="1">
    <location>
        <position position="47"/>
    </location>
    <ligand>
        <name>[4Fe-4S] cluster</name>
        <dbReference type="ChEBI" id="CHEBI:49883"/>
    </ligand>
</feature>
<feature type="binding site" evidence="1">
    <location>
        <position position="48"/>
    </location>
    <ligand>
        <name>[4Fe-4S] cluster</name>
        <dbReference type="ChEBI" id="CHEBI:49883"/>
    </ligand>
</feature>
<feature type="binding site" evidence="1">
    <location>
        <position position="112"/>
    </location>
    <ligand>
        <name>[4Fe-4S] cluster</name>
        <dbReference type="ChEBI" id="CHEBI:49883"/>
    </ligand>
</feature>
<feature type="binding site" evidence="1">
    <location>
        <position position="142"/>
    </location>
    <ligand>
        <name>[4Fe-4S] cluster</name>
        <dbReference type="ChEBI" id="CHEBI:49883"/>
    </ligand>
</feature>
<proteinExistence type="inferred from homology"/>
<accession>C4K2P3</accession>
<comment type="function">
    <text evidence="1">NDH-1 shuttles electrons from NADH, via FMN and iron-sulfur (Fe-S) centers, to quinones in the respiratory chain. The immediate electron acceptor for the enzyme in this species is believed to be ubiquinone. Couples the redox reaction to proton translocation (for every two electrons transferred, four hydrogen ions are translocated across the cytoplasmic membrane), and thus conserves the redox energy in a proton gradient.</text>
</comment>
<comment type="catalytic activity">
    <reaction evidence="1">
        <text>a quinone + NADH + 5 H(+)(in) = a quinol + NAD(+) + 4 H(+)(out)</text>
        <dbReference type="Rhea" id="RHEA:57888"/>
        <dbReference type="ChEBI" id="CHEBI:15378"/>
        <dbReference type="ChEBI" id="CHEBI:24646"/>
        <dbReference type="ChEBI" id="CHEBI:57540"/>
        <dbReference type="ChEBI" id="CHEBI:57945"/>
        <dbReference type="ChEBI" id="CHEBI:132124"/>
    </reaction>
</comment>
<comment type="cofactor">
    <cofactor evidence="1">
        <name>[4Fe-4S] cluster</name>
        <dbReference type="ChEBI" id="CHEBI:49883"/>
    </cofactor>
    <text evidence="1">Binds 1 [4Fe-4S] cluster.</text>
</comment>
<comment type="subunit">
    <text evidence="1">NDH-1 is composed of 14 different subunits. Subunits NuoB, C, D, E, F, and G constitute the peripheral sector of the complex.</text>
</comment>
<comment type="subcellular location">
    <subcellularLocation>
        <location evidence="1">Cell inner membrane</location>
        <topology evidence="1">Peripheral membrane protein</topology>
        <orientation evidence="1">Cytoplasmic side</orientation>
    </subcellularLocation>
</comment>
<comment type="similarity">
    <text evidence="1">Belongs to the complex I 20 kDa subunit family.</text>
</comment>
<evidence type="ECO:0000255" key="1">
    <source>
        <dbReference type="HAMAP-Rule" id="MF_01356"/>
    </source>
</evidence>
<protein>
    <recommendedName>
        <fullName evidence="1">NADH-quinone oxidoreductase subunit B</fullName>
        <ecNumber evidence="1">7.1.1.-</ecNumber>
    </recommendedName>
    <alternativeName>
        <fullName evidence="1">NADH dehydrogenase I subunit B</fullName>
    </alternativeName>
    <alternativeName>
        <fullName evidence="1">NDH-1 subunit B</fullName>
    </alternativeName>
</protein>
<dbReference type="EC" id="7.1.1.-" evidence="1"/>
<dbReference type="EMBL" id="CP001227">
    <property type="protein sequence ID" value="ACR47839.1"/>
    <property type="molecule type" value="Genomic_DNA"/>
</dbReference>
<dbReference type="RefSeq" id="WP_004995988.1">
    <property type="nucleotide sequence ID" value="NC_012730.1"/>
</dbReference>
<dbReference type="SMR" id="C4K2P3"/>
<dbReference type="KEGG" id="rpk:RPR_06855"/>
<dbReference type="HOGENOM" id="CLU_055737_7_3_5"/>
<dbReference type="Proteomes" id="UP000005015">
    <property type="component" value="Chromosome"/>
</dbReference>
<dbReference type="GO" id="GO:0005886">
    <property type="term" value="C:plasma membrane"/>
    <property type="evidence" value="ECO:0007669"/>
    <property type="project" value="UniProtKB-SubCell"/>
</dbReference>
<dbReference type="GO" id="GO:0045271">
    <property type="term" value="C:respiratory chain complex I"/>
    <property type="evidence" value="ECO:0007669"/>
    <property type="project" value="TreeGrafter"/>
</dbReference>
<dbReference type="GO" id="GO:0051539">
    <property type="term" value="F:4 iron, 4 sulfur cluster binding"/>
    <property type="evidence" value="ECO:0007669"/>
    <property type="project" value="UniProtKB-KW"/>
</dbReference>
<dbReference type="GO" id="GO:0005506">
    <property type="term" value="F:iron ion binding"/>
    <property type="evidence" value="ECO:0007669"/>
    <property type="project" value="UniProtKB-UniRule"/>
</dbReference>
<dbReference type="GO" id="GO:0008137">
    <property type="term" value="F:NADH dehydrogenase (ubiquinone) activity"/>
    <property type="evidence" value="ECO:0007669"/>
    <property type="project" value="InterPro"/>
</dbReference>
<dbReference type="GO" id="GO:0050136">
    <property type="term" value="F:NADH:ubiquinone reductase (non-electrogenic) activity"/>
    <property type="evidence" value="ECO:0007669"/>
    <property type="project" value="UniProtKB-UniRule"/>
</dbReference>
<dbReference type="GO" id="GO:0048038">
    <property type="term" value="F:quinone binding"/>
    <property type="evidence" value="ECO:0007669"/>
    <property type="project" value="UniProtKB-KW"/>
</dbReference>
<dbReference type="GO" id="GO:0009060">
    <property type="term" value="P:aerobic respiration"/>
    <property type="evidence" value="ECO:0007669"/>
    <property type="project" value="TreeGrafter"/>
</dbReference>
<dbReference type="GO" id="GO:0015990">
    <property type="term" value="P:electron transport coupled proton transport"/>
    <property type="evidence" value="ECO:0007669"/>
    <property type="project" value="TreeGrafter"/>
</dbReference>
<dbReference type="FunFam" id="3.40.50.12280:FF:000001">
    <property type="entry name" value="NADH-quinone oxidoreductase subunit B 2"/>
    <property type="match status" value="1"/>
</dbReference>
<dbReference type="Gene3D" id="3.40.50.12280">
    <property type="match status" value="1"/>
</dbReference>
<dbReference type="HAMAP" id="MF_01356">
    <property type="entry name" value="NDH1_NuoB"/>
    <property type="match status" value="1"/>
</dbReference>
<dbReference type="InterPro" id="IPR006137">
    <property type="entry name" value="NADH_UbQ_OxRdtase-like_20kDa"/>
</dbReference>
<dbReference type="InterPro" id="IPR006138">
    <property type="entry name" value="NADH_UQ_OxRdtase_20Kd_su"/>
</dbReference>
<dbReference type="NCBIfam" id="TIGR01957">
    <property type="entry name" value="nuoB_fam"/>
    <property type="match status" value="1"/>
</dbReference>
<dbReference type="NCBIfam" id="NF005012">
    <property type="entry name" value="PRK06411.1"/>
    <property type="match status" value="1"/>
</dbReference>
<dbReference type="PANTHER" id="PTHR11995">
    <property type="entry name" value="NADH DEHYDROGENASE"/>
    <property type="match status" value="1"/>
</dbReference>
<dbReference type="PANTHER" id="PTHR11995:SF14">
    <property type="entry name" value="NADH DEHYDROGENASE [UBIQUINONE] IRON-SULFUR PROTEIN 7, MITOCHONDRIAL"/>
    <property type="match status" value="1"/>
</dbReference>
<dbReference type="Pfam" id="PF01058">
    <property type="entry name" value="Oxidored_q6"/>
    <property type="match status" value="1"/>
</dbReference>
<dbReference type="SUPFAM" id="SSF56770">
    <property type="entry name" value="HydA/Nqo6-like"/>
    <property type="match status" value="1"/>
</dbReference>
<dbReference type="PROSITE" id="PS01150">
    <property type="entry name" value="COMPLEX1_20K"/>
    <property type="match status" value="1"/>
</dbReference>
<gene>
    <name evidence="1" type="primary">nuoB</name>
    <name type="ordered locus">RPR_06855</name>
</gene>